<proteinExistence type="inferred from homology"/>
<gene>
    <name type="primary">apeB</name>
    <name type="ordered locus">CA_C0607</name>
</gene>
<organism>
    <name type="scientific">Clostridium acetobutylicum (strain ATCC 824 / DSM 792 / JCM 1419 / IAM 19013 / LMG 5710 / NBRC 13948 / NRRL B-527 / VKM B-1787 / 2291 / W)</name>
    <dbReference type="NCBI Taxonomy" id="272562"/>
    <lineage>
        <taxon>Bacteria</taxon>
        <taxon>Bacillati</taxon>
        <taxon>Bacillota</taxon>
        <taxon>Clostridia</taxon>
        <taxon>Eubacteriales</taxon>
        <taxon>Clostridiaceae</taxon>
        <taxon>Clostridium</taxon>
    </lineage>
</organism>
<reference key="1">
    <citation type="journal article" date="2001" name="J. Bacteriol.">
        <title>Genome sequence and comparative analysis of the solvent-producing bacterium Clostridium acetobutylicum.</title>
        <authorList>
            <person name="Noelling J."/>
            <person name="Breton G."/>
            <person name="Omelchenko M.V."/>
            <person name="Makarova K.S."/>
            <person name="Zeng Q."/>
            <person name="Gibson R."/>
            <person name="Lee H.M."/>
            <person name="Dubois J."/>
            <person name="Qiu D."/>
            <person name="Hitti J."/>
            <person name="Wolf Y.I."/>
            <person name="Tatusov R.L."/>
            <person name="Sabathe F."/>
            <person name="Doucette-Stamm L.A."/>
            <person name="Soucaille P."/>
            <person name="Daly M.J."/>
            <person name="Bennett G.N."/>
            <person name="Koonin E.V."/>
            <person name="Smith D.R."/>
        </authorList>
    </citation>
    <scope>NUCLEOTIDE SEQUENCE [LARGE SCALE GENOMIC DNA]</scope>
    <source>
        <strain>ATCC 824 / DSM 792 / JCM 1419 / IAM 19013 / LMG 5710 / NBRC 13948 / NRRL B-527 / VKM B-1787 / 2291 / W</strain>
    </source>
</reference>
<comment type="cofactor">
    <cofactor evidence="1">
        <name>Zn(2+)</name>
        <dbReference type="ChEBI" id="CHEBI:29105"/>
    </cofactor>
</comment>
<comment type="similarity">
    <text evidence="3">Belongs to the peptidase M18 family.</text>
</comment>
<dbReference type="EC" id="3.4.11.-"/>
<dbReference type="EMBL" id="AE001437">
    <property type="protein sequence ID" value="AAK78585.1"/>
    <property type="molecule type" value="Genomic_DNA"/>
</dbReference>
<dbReference type="PIR" id="F96974">
    <property type="entry name" value="F96974"/>
</dbReference>
<dbReference type="RefSeq" id="NP_347245.1">
    <property type="nucleotide sequence ID" value="NC_003030.1"/>
</dbReference>
<dbReference type="RefSeq" id="WP_010963927.1">
    <property type="nucleotide sequence ID" value="NC_003030.1"/>
</dbReference>
<dbReference type="SMR" id="Q97LF4"/>
<dbReference type="STRING" id="272562.CA_C0607"/>
<dbReference type="KEGG" id="cac:CA_C0607"/>
<dbReference type="PATRIC" id="fig|272562.8.peg.810"/>
<dbReference type="eggNOG" id="COG1362">
    <property type="taxonomic scope" value="Bacteria"/>
</dbReference>
<dbReference type="HOGENOM" id="CLU_019532_2_0_9"/>
<dbReference type="OrthoDB" id="9764268at2"/>
<dbReference type="Proteomes" id="UP000000814">
    <property type="component" value="Chromosome"/>
</dbReference>
<dbReference type="GO" id="GO:0005737">
    <property type="term" value="C:cytoplasm"/>
    <property type="evidence" value="ECO:0007669"/>
    <property type="project" value="UniProtKB-ARBA"/>
</dbReference>
<dbReference type="GO" id="GO:0004177">
    <property type="term" value="F:aminopeptidase activity"/>
    <property type="evidence" value="ECO:0007669"/>
    <property type="project" value="UniProtKB-UniRule"/>
</dbReference>
<dbReference type="GO" id="GO:0008237">
    <property type="term" value="F:metallopeptidase activity"/>
    <property type="evidence" value="ECO:0007669"/>
    <property type="project" value="UniProtKB-UniRule"/>
</dbReference>
<dbReference type="GO" id="GO:0008270">
    <property type="term" value="F:zinc ion binding"/>
    <property type="evidence" value="ECO:0007669"/>
    <property type="project" value="UniProtKB-UniRule"/>
</dbReference>
<dbReference type="GO" id="GO:0006508">
    <property type="term" value="P:proteolysis"/>
    <property type="evidence" value="ECO:0007669"/>
    <property type="project" value="UniProtKB-UniRule"/>
</dbReference>
<dbReference type="CDD" id="cd05658">
    <property type="entry name" value="M18_DAP"/>
    <property type="match status" value="1"/>
</dbReference>
<dbReference type="FunFam" id="2.30.250.10:FF:000003">
    <property type="entry name" value="Probable M18 family aminopeptidase 2"/>
    <property type="match status" value="1"/>
</dbReference>
<dbReference type="Gene3D" id="2.30.250.10">
    <property type="entry name" value="Aminopeptidase i, Domain 2"/>
    <property type="match status" value="1"/>
</dbReference>
<dbReference type="Gene3D" id="3.40.630.10">
    <property type="entry name" value="Zn peptidases"/>
    <property type="match status" value="1"/>
</dbReference>
<dbReference type="HAMAP" id="MF_00467">
    <property type="entry name" value="Aminopeptidase_M18_2"/>
    <property type="match status" value="1"/>
</dbReference>
<dbReference type="InterPro" id="IPR022984">
    <property type="entry name" value="M18_aminopeptidase_2"/>
</dbReference>
<dbReference type="InterPro" id="IPR001948">
    <property type="entry name" value="Peptidase_M18"/>
</dbReference>
<dbReference type="InterPro" id="IPR023358">
    <property type="entry name" value="Peptidase_M18_dom2"/>
</dbReference>
<dbReference type="NCBIfam" id="NF002759">
    <property type="entry name" value="PRK02813.1"/>
    <property type="match status" value="1"/>
</dbReference>
<dbReference type="PANTHER" id="PTHR28570">
    <property type="entry name" value="ASPARTYL AMINOPEPTIDASE"/>
    <property type="match status" value="1"/>
</dbReference>
<dbReference type="PANTHER" id="PTHR28570:SF3">
    <property type="entry name" value="ASPARTYL AMINOPEPTIDASE"/>
    <property type="match status" value="1"/>
</dbReference>
<dbReference type="Pfam" id="PF02127">
    <property type="entry name" value="Peptidase_M18"/>
    <property type="match status" value="1"/>
</dbReference>
<dbReference type="PRINTS" id="PR00932">
    <property type="entry name" value="AMINO1PTASE"/>
</dbReference>
<dbReference type="SUPFAM" id="SSF101821">
    <property type="entry name" value="Aminopeptidase/glucanase lid domain"/>
    <property type="match status" value="1"/>
</dbReference>
<dbReference type="SUPFAM" id="SSF53187">
    <property type="entry name" value="Zn-dependent exopeptidases"/>
    <property type="match status" value="1"/>
</dbReference>
<evidence type="ECO:0000250" key="1"/>
<evidence type="ECO:0000255" key="2"/>
<evidence type="ECO:0000305" key="3"/>
<accession>Q97LF4</accession>
<sequence length="433" mass="48393">MKNELEFAKKLIDFIYDSPSPFHSVDNIKNTLIENGFAEIKEENKWELNKNGKYFVKRNDSALIAFTVGSGFVAKKGFKIIGGHTDSPTFRIKPNPEMVSENSYIKLNTEVYGGPILSTWFDRPLSIAGRVTVRGKSALFPETKLLNIKRPILVIPNLAIHMNRDVNSGFKINPQVDTLPIIGIINDKFEKENYLMKIIASELGEDIENIIDFDLFLYEYDKGCIMGINNEFISSSRLDDMEMVHAGLNALVNAKCSEATNVLACFDNEEIGSATKQGADSQFLSDILERIVLSFGGDREDFFRALHNSFMISSDSAHAVHPNKGEKADPITRPHINEGPVIKISAAQKYTSDSNSIAVYEEVCRLSGVPYQKFVNRSDERGGSTIGPITATHTAIRTVDIGTPLLAMHSIRELCGTLDHMYVEKSFEEFYNL</sequence>
<protein>
    <recommendedName>
        <fullName>Probable M18 family aminopeptidase 2</fullName>
        <ecNumber>3.4.11.-</ecNumber>
    </recommendedName>
</protein>
<keyword id="KW-0031">Aminopeptidase</keyword>
<keyword id="KW-0378">Hydrolase</keyword>
<keyword id="KW-0479">Metal-binding</keyword>
<keyword id="KW-0482">Metalloprotease</keyword>
<keyword id="KW-0645">Protease</keyword>
<keyword id="KW-1185">Reference proteome</keyword>
<keyword id="KW-0862">Zinc</keyword>
<feature type="chain" id="PRO_0000173461" description="Probable M18 family aminopeptidase 2">
    <location>
        <begin position="1"/>
        <end position="433"/>
    </location>
</feature>
<feature type="binding site" evidence="2">
    <location>
        <position position="84"/>
    </location>
    <ligand>
        <name>Zn(2+)</name>
        <dbReference type="ChEBI" id="CHEBI:29105"/>
    </ligand>
</feature>
<feature type="binding site" evidence="2">
    <location>
        <position position="161"/>
    </location>
    <ligand>
        <name>Zn(2+)</name>
        <dbReference type="ChEBI" id="CHEBI:29105"/>
    </ligand>
</feature>
<feature type="binding site" evidence="2">
    <location>
        <position position="409"/>
    </location>
    <ligand>
        <name>Zn(2+)</name>
        <dbReference type="ChEBI" id="CHEBI:29105"/>
    </ligand>
</feature>
<name>APEB_CLOAB</name>